<organism>
    <name type="scientific">Oryza sativa subsp. japonica</name>
    <name type="common">Rice</name>
    <dbReference type="NCBI Taxonomy" id="39947"/>
    <lineage>
        <taxon>Eukaryota</taxon>
        <taxon>Viridiplantae</taxon>
        <taxon>Streptophyta</taxon>
        <taxon>Embryophyta</taxon>
        <taxon>Tracheophyta</taxon>
        <taxon>Spermatophyta</taxon>
        <taxon>Magnoliopsida</taxon>
        <taxon>Liliopsida</taxon>
        <taxon>Poales</taxon>
        <taxon>Poaceae</taxon>
        <taxon>BOP clade</taxon>
        <taxon>Oryzoideae</taxon>
        <taxon>Oryzeae</taxon>
        <taxon>Oryzinae</taxon>
        <taxon>Oryza</taxon>
        <taxon>Oryza sativa</taxon>
    </lineage>
</organism>
<evidence type="ECO:0000250" key="1"/>
<evidence type="ECO:0000256" key="2">
    <source>
        <dbReference type="SAM" id="MobiDB-lite"/>
    </source>
</evidence>
<evidence type="ECO:0000269" key="3">
    <source>
    </source>
</evidence>
<evidence type="ECO:0000305" key="4"/>
<feature type="chain" id="PRO_0000422625" description="Replication protein A 32 kDa subunit C">
    <location>
        <begin position="1"/>
        <end position="430"/>
    </location>
</feature>
<feature type="DNA-binding region" description="OB">
    <location>
        <begin position="86"/>
        <end position="160"/>
    </location>
</feature>
<feature type="region of interest" description="Disordered" evidence="2">
    <location>
        <begin position="14"/>
        <end position="46"/>
    </location>
</feature>
<feature type="compositionally biased region" description="Low complexity" evidence="2">
    <location>
        <begin position="23"/>
        <end position="38"/>
    </location>
</feature>
<proteinExistence type="evidence at protein level"/>
<dbReference type="EMBL" id="AP003770">
    <property type="protein sequence ID" value="BAD53865.1"/>
    <property type="status" value="ALT_SEQ"/>
    <property type="molecule type" value="Genomic_DNA"/>
</dbReference>
<dbReference type="EMBL" id="AP008212">
    <property type="protein sequence ID" value="BAH93699.1"/>
    <property type="status" value="ALT_SEQ"/>
    <property type="molecule type" value="Genomic_DNA"/>
</dbReference>
<dbReference type="EMBL" id="AP014962">
    <property type="protein sequence ID" value="BAS99255.1"/>
    <property type="molecule type" value="Genomic_DNA"/>
</dbReference>
<dbReference type="EMBL" id="AK102353">
    <property type="status" value="NOT_ANNOTATED_CDS"/>
    <property type="molecule type" value="mRNA"/>
</dbReference>
<dbReference type="RefSeq" id="XP_015642557.1">
    <property type="nucleotide sequence ID" value="XM_015787071.1"/>
</dbReference>
<dbReference type="SMR" id="Q5Z8L1"/>
<dbReference type="ELM" id="Q5Z8L1"/>
<dbReference type="FunCoup" id="Q5Z8L1">
    <property type="interactions" value="2246"/>
</dbReference>
<dbReference type="IntAct" id="Q5Z8L1">
    <property type="interactions" value="2"/>
</dbReference>
<dbReference type="STRING" id="39947.Q5Z8L1"/>
<dbReference type="PaxDb" id="39947-Q5Z8L1"/>
<dbReference type="EnsemblPlants" id="Os06t0693300-01">
    <property type="protein sequence ID" value="Os06t0693300-01"/>
    <property type="gene ID" value="Os06g0693300"/>
</dbReference>
<dbReference type="Gramene" id="Os06t0693300-01">
    <property type="protein sequence ID" value="Os06t0693300-01"/>
    <property type="gene ID" value="Os06g0693300"/>
</dbReference>
<dbReference type="KEGG" id="dosa:Os06g0693300"/>
<dbReference type="eggNOG" id="KOG3108">
    <property type="taxonomic scope" value="Eukaryota"/>
</dbReference>
<dbReference type="HOGENOM" id="CLU_051033_3_0_1"/>
<dbReference type="InParanoid" id="Q5Z8L1"/>
<dbReference type="OMA" id="PDIMGVV"/>
<dbReference type="OrthoDB" id="25571at2759"/>
<dbReference type="PlantReactome" id="R-OSA-9645850">
    <property type="pathway name" value="Activation of pre-replication complex"/>
</dbReference>
<dbReference type="PlantReactome" id="R-OSA-9675782">
    <property type="pathway name" value="Maturation"/>
</dbReference>
<dbReference type="PlantReactome" id="R-OSA-9675885">
    <property type="pathway name" value="Lagging strand synthesis"/>
</dbReference>
<dbReference type="Proteomes" id="UP000000763">
    <property type="component" value="Chromosome 6"/>
</dbReference>
<dbReference type="Proteomes" id="UP000059680">
    <property type="component" value="Chromosome 6"/>
</dbReference>
<dbReference type="GO" id="GO:0000781">
    <property type="term" value="C:chromosome, telomeric region"/>
    <property type="evidence" value="ECO:0000318"/>
    <property type="project" value="GO_Central"/>
</dbReference>
<dbReference type="GO" id="GO:0005662">
    <property type="term" value="C:DNA replication factor A complex"/>
    <property type="evidence" value="ECO:0000318"/>
    <property type="project" value="GO_Central"/>
</dbReference>
<dbReference type="GO" id="GO:0035861">
    <property type="term" value="C:site of double-strand break"/>
    <property type="evidence" value="ECO:0000318"/>
    <property type="project" value="GO_Central"/>
</dbReference>
<dbReference type="GO" id="GO:0003697">
    <property type="term" value="F:single-stranded DNA binding"/>
    <property type="evidence" value="ECO:0000318"/>
    <property type="project" value="GO_Central"/>
</dbReference>
<dbReference type="GO" id="GO:0042162">
    <property type="term" value="F:telomeric DNA binding"/>
    <property type="evidence" value="ECO:0000318"/>
    <property type="project" value="GO_Central"/>
</dbReference>
<dbReference type="GO" id="GO:0006260">
    <property type="term" value="P:DNA replication"/>
    <property type="evidence" value="ECO:0000318"/>
    <property type="project" value="GO_Central"/>
</dbReference>
<dbReference type="GO" id="GO:0000724">
    <property type="term" value="P:double-strand break repair via homologous recombination"/>
    <property type="evidence" value="ECO:0000318"/>
    <property type="project" value="GO_Central"/>
</dbReference>
<dbReference type="GO" id="GO:0006289">
    <property type="term" value="P:nucleotide-excision repair"/>
    <property type="evidence" value="ECO:0000318"/>
    <property type="project" value="GO_Central"/>
</dbReference>
<dbReference type="CDD" id="cd04478">
    <property type="entry name" value="RPA2_DBD_D"/>
    <property type="match status" value="1"/>
</dbReference>
<dbReference type="FunFam" id="1.10.10.10:FF:000168">
    <property type="entry name" value="Replication protein A 32 kDa subunit"/>
    <property type="match status" value="1"/>
</dbReference>
<dbReference type="FunFam" id="2.40.50.140:FF:000184">
    <property type="entry name" value="replication protein A 32 kDa subunit A-like"/>
    <property type="match status" value="1"/>
</dbReference>
<dbReference type="Gene3D" id="2.40.50.140">
    <property type="entry name" value="Nucleic acid-binding proteins"/>
    <property type="match status" value="1"/>
</dbReference>
<dbReference type="Gene3D" id="1.10.10.10">
    <property type="entry name" value="Winged helix-like DNA-binding domain superfamily/Winged helix DNA-binding domain"/>
    <property type="match status" value="1"/>
</dbReference>
<dbReference type="InterPro" id="IPR012340">
    <property type="entry name" value="NA-bd_OB-fold"/>
</dbReference>
<dbReference type="InterPro" id="IPR040260">
    <property type="entry name" value="RFA2-like"/>
</dbReference>
<dbReference type="InterPro" id="IPR014892">
    <property type="entry name" value="RPA_C"/>
</dbReference>
<dbReference type="InterPro" id="IPR036388">
    <property type="entry name" value="WH-like_DNA-bd_sf"/>
</dbReference>
<dbReference type="InterPro" id="IPR036390">
    <property type="entry name" value="WH_DNA-bd_sf"/>
</dbReference>
<dbReference type="PANTHER" id="PTHR13989:SF30">
    <property type="entry name" value="REPLICATION PROTEIN A 32 KDA SUBUNIT C"/>
    <property type="match status" value="1"/>
</dbReference>
<dbReference type="PANTHER" id="PTHR13989">
    <property type="entry name" value="REPLICATION PROTEIN A-RELATED"/>
    <property type="match status" value="1"/>
</dbReference>
<dbReference type="Pfam" id="PF08784">
    <property type="entry name" value="RPA_C"/>
    <property type="match status" value="1"/>
</dbReference>
<dbReference type="SUPFAM" id="SSF50249">
    <property type="entry name" value="Nucleic acid-binding proteins"/>
    <property type="match status" value="1"/>
</dbReference>
<dbReference type="SUPFAM" id="SSF46785">
    <property type="entry name" value="Winged helix' DNA-binding domain"/>
    <property type="match status" value="1"/>
</dbReference>
<gene>
    <name type="primary">RPA2C</name>
    <name type="synonym">RPA32C</name>
    <name type="ordered locus">Os06g0693300</name>
    <name type="ordered locus">LOC_Os06g47830</name>
    <name type="ORF">P0550B04.15</name>
</gene>
<name>RFA2C_ORYSJ</name>
<reference key="1">
    <citation type="journal article" date="2005" name="Nature">
        <title>The map-based sequence of the rice genome.</title>
        <authorList>
            <consortium name="International rice genome sequencing project (IRGSP)"/>
        </authorList>
    </citation>
    <scope>NUCLEOTIDE SEQUENCE [LARGE SCALE GENOMIC DNA]</scope>
    <source>
        <strain>cv. Nipponbare</strain>
    </source>
</reference>
<reference key="2">
    <citation type="journal article" date="2008" name="Nucleic Acids Res.">
        <title>The rice annotation project database (RAP-DB): 2008 update.</title>
        <authorList>
            <consortium name="The rice annotation project (RAP)"/>
        </authorList>
    </citation>
    <scope>GENOME REANNOTATION</scope>
    <source>
        <strain>cv. Nipponbare</strain>
    </source>
</reference>
<reference key="3">
    <citation type="journal article" date="2013" name="Rice">
        <title>Improvement of the Oryza sativa Nipponbare reference genome using next generation sequence and optical map data.</title>
        <authorList>
            <person name="Kawahara Y."/>
            <person name="de la Bastide M."/>
            <person name="Hamilton J.P."/>
            <person name="Kanamori H."/>
            <person name="McCombie W.R."/>
            <person name="Ouyang S."/>
            <person name="Schwartz D.C."/>
            <person name="Tanaka T."/>
            <person name="Wu J."/>
            <person name="Zhou S."/>
            <person name="Childs K.L."/>
            <person name="Davidson R.M."/>
            <person name="Lin H."/>
            <person name="Quesada-Ocampo L."/>
            <person name="Vaillancourt B."/>
            <person name="Sakai H."/>
            <person name="Lee S.S."/>
            <person name="Kim J."/>
            <person name="Numa H."/>
            <person name="Itoh T."/>
            <person name="Buell C.R."/>
            <person name="Matsumoto T."/>
        </authorList>
    </citation>
    <scope>GENOME REANNOTATION</scope>
    <source>
        <strain>cv. Nipponbare</strain>
    </source>
</reference>
<reference key="4">
    <citation type="journal article" date="2003" name="Science">
        <title>Collection, mapping, and annotation of over 28,000 cDNA clones from japonica rice.</title>
        <authorList>
            <consortium name="The rice full-length cDNA consortium"/>
        </authorList>
    </citation>
    <scope>NUCLEOTIDE SEQUENCE [LARGE SCALE MRNA]</scope>
    <source>
        <strain>cv. Nipponbare</strain>
    </source>
</reference>
<reference key="5">
    <citation type="journal article" date="2006" name="J. Biochem.">
        <title>A higher plant has three different types of RPA heterotrimeric complex.</title>
        <authorList>
            <person name="Ishibashi T."/>
            <person name="Kimura S."/>
            <person name="Sakaguchi K."/>
        </authorList>
    </citation>
    <scope>INTERACTION WITH RPA1C AND RPA3</scope>
</reference>
<keyword id="KW-0227">DNA damage</keyword>
<keyword id="KW-0233">DNA recombination</keyword>
<keyword id="KW-0234">DNA repair</keyword>
<keyword id="KW-0235">DNA replication</keyword>
<keyword id="KW-0238">DNA-binding</keyword>
<keyword id="KW-0539">Nucleus</keyword>
<keyword id="KW-1185">Reference proteome</keyword>
<sequence>MAAAASYFSGTALMPSQRSGAPAPEYSAAGTGAAAAPSPSKPRDPRFSGCVPATVLHISRSFAAALAADGGGDPVFSIDGVETTNVRVLGRVVSVVSRDTDVCFTLDDSTGKIPLVRWITDQSDTRDTSYIQEGVYVKVQVNLMGFQAKKQGLARSIRPINNFNEVVLHFIECMHVHLESVQSKMQRQLPPSVQTNEYTHVPSSGGVRDYQVHFTPQVNQGLPPAVQTNTSTYVPLLGGVRDHQAHFAQVNQGQFSPAVQANTSTHLPFSGGVGEHQIHFTPKVNQGQFPPSVQTNTSAHVPYSGGFREHQVHFTPPVNQGQFPPAVQTNLYNHAASSGGVREQVHLTQANQFSAYSSTGGLQHDPQRMVLEALQQPDILALEHGAHVDELVRRTGMPKANIMGVVKHLAAAGFVYWTIDDNHVKSMCNG</sequence>
<accession>Q5Z8L1</accession>
<accession>A0A0P0X0N4</accession>
<accession>C7J489</accession>
<comment type="function">
    <text evidence="1">Component of the replication protein A complex (RPA) required for DNA recombination, repair and replication. The activity of RPA is mediated by single-stranded DNA binding and protein interactions (By similarity).</text>
</comment>
<comment type="subunit">
    <text evidence="1 3">Heterotrimer of RPA1, RPA2 and RPA3 (canonical replication protein A complex) (By similarity). Interacts with RPA1C and RPA3.</text>
</comment>
<comment type="interaction">
    <interactant intactId="EBI-849544">
        <id>Q5Z8L1</id>
    </interactant>
    <interactant intactId="EBI-849558">
        <id>Q65XV7</id>
        <label>RPA1C</label>
    </interactant>
    <organismsDiffer>false</organismsDiffer>
    <experiments>4</experiments>
</comment>
<comment type="interaction">
    <interactant intactId="EBI-849544">
        <id>Q5Z8L1</id>
    </interactant>
    <interactant intactId="EBI-849521">
        <id>Q9SDK9</id>
        <label>RPA3</label>
    </interactant>
    <organismsDiffer>false</organismsDiffer>
    <experiments>2</experiments>
</comment>
<comment type="subcellular location">
    <subcellularLocation>
        <location evidence="1">Nucleus</location>
    </subcellularLocation>
</comment>
<comment type="PTM">
    <text evidence="1">Phosphorylated in a cell-cycle-dependent manner (from the S phase until mitosis). In response to DNA damage, recruited to DNA-repair nuclear foci, as a hypophosphorylated form (By similarity).</text>
</comment>
<comment type="similarity">
    <text evidence="4">Belongs to the replication factor A protein 2 family.</text>
</comment>
<comment type="sequence caution" evidence="4">
    <conflict type="erroneous gene model prediction">
        <sequence resource="EMBL-CDS" id="BAD53865"/>
    </conflict>
</comment>
<comment type="sequence caution" evidence="4">
    <conflict type="erroneous gene model prediction">
        <sequence resource="EMBL-CDS" id="BAH93699"/>
    </conflict>
</comment>
<protein>
    <recommendedName>
        <fullName>Replication protein A 32 kDa subunit C</fullName>
        <shortName>OsRPA32C</shortName>
    </recommendedName>
    <alternativeName>
        <fullName>OsRPA32-3</fullName>
    </alternativeName>
    <alternativeName>
        <fullName>Replication factor A protein 2C</fullName>
    </alternativeName>
    <alternativeName>
        <fullName>Replication protein A 2C</fullName>
    </alternativeName>
</protein>